<gene>
    <name type="ordered locus">BU359</name>
</gene>
<organism>
    <name type="scientific">Buchnera aphidicola subsp. Acyrthosiphon pisum (strain APS)</name>
    <name type="common">Acyrthosiphon pisum symbiotic bacterium</name>
    <dbReference type="NCBI Taxonomy" id="107806"/>
    <lineage>
        <taxon>Bacteria</taxon>
        <taxon>Pseudomonadati</taxon>
        <taxon>Pseudomonadota</taxon>
        <taxon>Gammaproteobacteria</taxon>
        <taxon>Enterobacterales</taxon>
        <taxon>Erwiniaceae</taxon>
        <taxon>Buchnera</taxon>
    </lineage>
</organism>
<sequence length="382" mass="42699">MTNRKSLAMVIPMLLAASNGVNALEVFHKHGNKLELYGSINPNHKLNHSFLANKITSHKDDTNAILGLSGEVNIADELFSYATIEYGIDLSVPEQLLDKQQPNNLRLGYAGFKYGNWGSIDYGRNYGVLHDVQALTNRSPYINKDSIFSYNDNYMTGRSNSLLTYKNDDIFGLIDGMSFILQYQDQSENRAQNQTNGPGWGISIKYETDVGLTAIGSCFSSQRFQSDKSNQDNKLTPSVGAYGLGFKYDANDIYIAAFYGEGRNLTPSLNILSDNNASKDQPYINKTQNIEAIAEYNFHSGFHPSLSYLDSKGQNLNIKDATTVPKNLELAKQINISTRYEFNKNISTYMNYTINLLKSDNVIKEQNIPTDNTIGAGIVYHF</sequence>
<dbReference type="EMBL" id="BA000003">
    <property type="protein sequence ID" value="BAB13063.1"/>
    <property type="molecule type" value="Genomic_DNA"/>
</dbReference>
<dbReference type="RefSeq" id="NP_240177.1">
    <property type="nucleotide sequence ID" value="NC_002528.1"/>
</dbReference>
<dbReference type="RefSeq" id="WP_010896084.1">
    <property type="nucleotide sequence ID" value="NC_002528.1"/>
</dbReference>
<dbReference type="SMR" id="P57440"/>
<dbReference type="STRING" id="563178.BUAP5A_352"/>
<dbReference type="EnsemblBacteria" id="BAB13063">
    <property type="protein sequence ID" value="BAB13063"/>
    <property type="gene ID" value="BAB13063"/>
</dbReference>
<dbReference type="KEGG" id="buc:BU359"/>
<dbReference type="PATRIC" id="fig|107806.10.peg.372"/>
<dbReference type="eggNOG" id="COG3203">
    <property type="taxonomic scope" value="Bacteria"/>
</dbReference>
<dbReference type="HOGENOM" id="CLU_058202_0_0_6"/>
<dbReference type="BioCyc" id="BAPH107806:GBZJ-352-MONOMER"/>
<dbReference type="Proteomes" id="UP000001806">
    <property type="component" value="Chromosome"/>
</dbReference>
<dbReference type="GO" id="GO:0009279">
    <property type="term" value="C:cell outer membrane"/>
    <property type="evidence" value="ECO:0007669"/>
    <property type="project" value="UniProtKB-SubCell"/>
</dbReference>
<dbReference type="GO" id="GO:0046930">
    <property type="term" value="C:pore complex"/>
    <property type="evidence" value="ECO:0007669"/>
    <property type="project" value="UniProtKB-KW"/>
</dbReference>
<dbReference type="GO" id="GO:0015288">
    <property type="term" value="F:porin activity"/>
    <property type="evidence" value="ECO:0007669"/>
    <property type="project" value="UniProtKB-KW"/>
</dbReference>
<dbReference type="GO" id="GO:0034220">
    <property type="term" value="P:monoatomic ion transmembrane transport"/>
    <property type="evidence" value="ECO:0007669"/>
    <property type="project" value="InterPro"/>
</dbReference>
<dbReference type="CDD" id="cd00342">
    <property type="entry name" value="gram_neg_porins"/>
    <property type="match status" value="1"/>
</dbReference>
<dbReference type="Gene3D" id="2.40.160.10">
    <property type="entry name" value="Porin"/>
    <property type="match status" value="1"/>
</dbReference>
<dbReference type="InterPro" id="IPR050298">
    <property type="entry name" value="Gram-neg_bact_OMP"/>
</dbReference>
<dbReference type="InterPro" id="IPR033900">
    <property type="entry name" value="Gram_neg_porin_domain"/>
</dbReference>
<dbReference type="InterPro" id="IPR023614">
    <property type="entry name" value="Porin_dom_sf"/>
</dbReference>
<dbReference type="InterPro" id="IPR001897">
    <property type="entry name" value="Porin_gammaproteobac"/>
</dbReference>
<dbReference type="InterPro" id="IPR001702">
    <property type="entry name" value="Porin_Gram-ve"/>
</dbReference>
<dbReference type="PANTHER" id="PTHR34501:SF8">
    <property type="entry name" value="OUTER MEMBRANE PORIN N-RELATED"/>
    <property type="match status" value="1"/>
</dbReference>
<dbReference type="PANTHER" id="PTHR34501">
    <property type="entry name" value="PROTEIN YDDL-RELATED"/>
    <property type="match status" value="1"/>
</dbReference>
<dbReference type="Pfam" id="PF00267">
    <property type="entry name" value="Porin_1"/>
    <property type="match status" value="1"/>
</dbReference>
<dbReference type="PRINTS" id="PR00183">
    <property type="entry name" value="ECOLIPORIN"/>
</dbReference>
<dbReference type="PRINTS" id="PR00182">
    <property type="entry name" value="ECOLNEIPORIN"/>
</dbReference>
<dbReference type="SUPFAM" id="SSF56935">
    <property type="entry name" value="Porins"/>
    <property type="match status" value="1"/>
</dbReference>
<comment type="function">
    <text evidence="1">Forms pores that allow passive diffusion of small molecules across the membrane.</text>
</comment>
<comment type="subunit">
    <text evidence="1">Homotrimer.</text>
</comment>
<comment type="subcellular location">
    <subcellularLocation>
        <location evidence="1">Cell outer membrane</location>
        <topology evidence="1">Multi-pass membrane protein</topology>
    </subcellularLocation>
</comment>
<comment type="similarity">
    <text evidence="3">Belongs to the Gram-negative porin family.</text>
</comment>
<proteinExistence type="inferred from homology"/>
<keyword id="KW-0998">Cell outer membrane</keyword>
<keyword id="KW-0406">Ion transport</keyword>
<keyword id="KW-0472">Membrane</keyword>
<keyword id="KW-0626">Porin</keyword>
<keyword id="KW-1185">Reference proteome</keyword>
<keyword id="KW-0732">Signal</keyword>
<keyword id="KW-0812">Transmembrane</keyword>
<keyword id="KW-1134">Transmembrane beta strand</keyword>
<keyword id="KW-0813">Transport</keyword>
<protein>
    <recommendedName>
        <fullName>Porin-like protein BU359</fullName>
    </recommendedName>
</protein>
<accession>P57440</accession>
<reference key="1">
    <citation type="journal article" date="2000" name="Nature">
        <title>Genome sequence of the endocellular bacterial symbiont of aphids Buchnera sp. APS.</title>
        <authorList>
            <person name="Shigenobu S."/>
            <person name="Watanabe H."/>
            <person name="Hattori M."/>
            <person name="Sakaki Y."/>
            <person name="Ishikawa H."/>
        </authorList>
    </citation>
    <scope>NUCLEOTIDE SEQUENCE [LARGE SCALE GENOMIC DNA]</scope>
    <source>
        <strain>APS</strain>
    </source>
</reference>
<name>PORL_BUCAI</name>
<feature type="signal peptide" evidence="2">
    <location>
        <begin position="1"/>
        <end position="23"/>
    </location>
</feature>
<feature type="chain" id="PRO_0000025251" description="Porin-like protein BU359">
    <location>
        <begin position="24"/>
        <end position="382"/>
    </location>
</feature>
<evidence type="ECO:0000250" key="1"/>
<evidence type="ECO:0000255" key="2"/>
<evidence type="ECO:0000305" key="3"/>